<name>GLMU_COLP3</name>
<sequence>MSLSVVILAAGKGTRMRSSLPKVLHSVAEKPMVGHVIDSARQLGASNIYVVYGFGGDVLKATLTKDNTGDDLTFVEQVEQLGTGHAVDQASPFLTDDEDVLVLYGDVPLTKVSTLESLLAAKPTDGMALLTVHLANPMGYGRIVRQEISGKQQVVGIIEQKDANEEQLKINEANTGILLANGGDLKRWLSNLSSDNAQGEYYLTDIIAAAHGEGKVVATAHPETEIEVEGANNRVQLATLERAYQARIAEELMIAGASLRDPARIDVRGNLTTGTEVSIDINCIFEGEVSLADNVQIGANCIIKNSTIGANVEIKPNSIIEDTIIEADCSVGPFARLRPGSVMKQDSHVGNFVEMKKTTLGVGSKAGHLSYLGNAEIGTKVNIGAGTITCNYDGVNKSTTEIGDNAFIGSNSSLVAPVIIGNSATVGAGSVISKEVEDNDLALTRAKQRNIAGWQRPVKKS</sequence>
<evidence type="ECO:0000255" key="1">
    <source>
        <dbReference type="HAMAP-Rule" id="MF_01631"/>
    </source>
</evidence>
<accession>Q47UE0</accession>
<proteinExistence type="inferred from homology"/>
<protein>
    <recommendedName>
        <fullName evidence="1">Bifunctional protein GlmU</fullName>
    </recommendedName>
    <domain>
        <recommendedName>
            <fullName evidence="1">UDP-N-acetylglucosamine pyrophosphorylase</fullName>
            <ecNumber evidence="1">2.7.7.23</ecNumber>
        </recommendedName>
        <alternativeName>
            <fullName evidence="1">N-acetylglucosamine-1-phosphate uridyltransferase</fullName>
        </alternativeName>
    </domain>
    <domain>
        <recommendedName>
            <fullName evidence="1">Glucosamine-1-phosphate N-acetyltransferase</fullName>
            <ecNumber evidence="1">2.3.1.157</ecNumber>
        </recommendedName>
    </domain>
</protein>
<feature type="chain" id="PRO_0000233759" description="Bifunctional protein GlmU">
    <location>
        <begin position="1"/>
        <end position="461"/>
    </location>
</feature>
<feature type="region of interest" description="Pyrophosphorylase" evidence="1">
    <location>
        <begin position="1"/>
        <end position="234"/>
    </location>
</feature>
<feature type="region of interest" description="Linker" evidence="1">
    <location>
        <begin position="235"/>
        <end position="255"/>
    </location>
</feature>
<feature type="region of interest" description="N-acetyltransferase" evidence="1">
    <location>
        <begin position="256"/>
        <end position="461"/>
    </location>
</feature>
<feature type="active site" description="Proton acceptor" evidence="1">
    <location>
        <position position="368"/>
    </location>
</feature>
<feature type="binding site" evidence="1">
    <location>
        <begin position="8"/>
        <end position="11"/>
    </location>
    <ligand>
        <name>UDP-N-acetyl-alpha-D-glucosamine</name>
        <dbReference type="ChEBI" id="CHEBI:57705"/>
    </ligand>
</feature>
<feature type="binding site" evidence="1">
    <location>
        <position position="22"/>
    </location>
    <ligand>
        <name>UDP-N-acetyl-alpha-D-glucosamine</name>
        <dbReference type="ChEBI" id="CHEBI:57705"/>
    </ligand>
</feature>
<feature type="binding site" evidence="1">
    <location>
        <position position="77"/>
    </location>
    <ligand>
        <name>UDP-N-acetyl-alpha-D-glucosamine</name>
        <dbReference type="ChEBI" id="CHEBI:57705"/>
    </ligand>
</feature>
<feature type="binding site" evidence="1">
    <location>
        <begin position="82"/>
        <end position="83"/>
    </location>
    <ligand>
        <name>UDP-N-acetyl-alpha-D-glucosamine</name>
        <dbReference type="ChEBI" id="CHEBI:57705"/>
    </ligand>
</feature>
<feature type="binding site" evidence="1">
    <location>
        <begin position="104"/>
        <end position="106"/>
    </location>
    <ligand>
        <name>UDP-N-acetyl-alpha-D-glucosamine</name>
        <dbReference type="ChEBI" id="CHEBI:57705"/>
    </ligand>
</feature>
<feature type="binding site" evidence="1">
    <location>
        <position position="106"/>
    </location>
    <ligand>
        <name>Mg(2+)</name>
        <dbReference type="ChEBI" id="CHEBI:18420"/>
    </ligand>
</feature>
<feature type="binding site" evidence="1">
    <location>
        <position position="141"/>
    </location>
    <ligand>
        <name>UDP-N-acetyl-alpha-D-glucosamine</name>
        <dbReference type="ChEBI" id="CHEBI:57705"/>
    </ligand>
</feature>
<feature type="binding site" evidence="1">
    <location>
        <position position="159"/>
    </location>
    <ligand>
        <name>UDP-N-acetyl-alpha-D-glucosamine</name>
        <dbReference type="ChEBI" id="CHEBI:57705"/>
    </ligand>
</feature>
<feature type="binding site" evidence="1">
    <location>
        <position position="174"/>
    </location>
    <ligand>
        <name>UDP-N-acetyl-alpha-D-glucosamine</name>
        <dbReference type="ChEBI" id="CHEBI:57705"/>
    </ligand>
</feature>
<feature type="binding site" evidence="1">
    <location>
        <position position="232"/>
    </location>
    <ligand>
        <name>Mg(2+)</name>
        <dbReference type="ChEBI" id="CHEBI:18420"/>
    </ligand>
</feature>
<feature type="binding site" evidence="1">
    <location>
        <position position="232"/>
    </location>
    <ligand>
        <name>UDP-N-acetyl-alpha-D-glucosamine</name>
        <dbReference type="ChEBI" id="CHEBI:57705"/>
    </ligand>
</feature>
<feature type="binding site" evidence="1">
    <location>
        <position position="338"/>
    </location>
    <ligand>
        <name>UDP-N-acetyl-alpha-D-glucosamine</name>
        <dbReference type="ChEBI" id="CHEBI:57705"/>
    </ligand>
</feature>
<feature type="binding site" evidence="1">
    <location>
        <position position="356"/>
    </location>
    <ligand>
        <name>UDP-N-acetyl-alpha-D-glucosamine</name>
        <dbReference type="ChEBI" id="CHEBI:57705"/>
    </ligand>
</feature>
<feature type="binding site" evidence="1">
    <location>
        <position position="371"/>
    </location>
    <ligand>
        <name>UDP-N-acetyl-alpha-D-glucosamine</name>
        <dbReference type="ChEBI" id="CHEBI:57705"/>
    </ligand>
</feature>
<feature type="binding site" evidence="1">
    <location>
        <position position="382"/>
    </location>
    <ligand>
        <name>UDP-N-acetyl-alpha-D-glucosamine</name>
        <dbReference type="ChEBI" id="CHEBI:57705"/>
    </ligand>
</feature>
<feature type="binding site" evidence="1">
    <location>
        <position position="385"/>
    </location>
    <ligand>
        <name>acetyl-CoA</name>
        <dbReference type="ChEBI" id="CHEBI:57288"/>
    </ligand>
</feature>
<feature type="binding site" evidence="1">
    <location>
        <begin position="391"/>
        <end position="392"/>
    </location>
    <ligand>
        <name>acetyl-CoA</name>
        <dbReference type="ChEBI" id="CHEBI:57288"/>
    </ligand>
</feature>
<feature type="binding site" evidence="1">
    <location>
        <position position="410"/>
    </location>
    <ligand>
        <name>acetyl-CoA</name>
        <dbReference type="ChEBI" id="CHEBI:57288"/>
    </ligand>
</feature>
<feature type="binding site" evidence="1">
    <location>
        <position position="428"/>
    </location>
    <ligand>
        <name>acetyl-CoA</name>
        <dbReference type="ChEBI" id="CHEBI:57288"/>
    </ligand>
</feature>
<feature type="binding site" evidence="1">
    <location>
        <position position="445"/>
    </location>
    <ligand>
        <name>acetyl-CoA</name>
        <dbReference type="ChEBI" id="CHEBI:57288"/>
    </ligand>
</feature>
<keyword id="KW-0012">Acyltransferase</keyword>
<keyword id="KW-0133">Cell shape</keyword>
<keyword id="KW-0961">Cell wall biogenesis/degradation</keyword>
<keyword id="KW-0963">Cytoplasm</keyword>
<keyword id="KW-0460">Magnesium</keyword>
<keyword id="KW-0479">Metal-binding</keyword>
<keyword id="KW-0511">Multifunctional enzyme</keyword>
<keyword id="KW-0548">Nucleotidyltransferase</keyword>
<keyword id="KW-0573">Peptidoglycan synthesis</keyword>
<keyword id="KW-0677">Repeat</keyword>
<keyword id="KW-0808">Transferase</keyword>
<gene>
    <name evidence="1" type="primary">glmU</name>
    <name type="ordered locus">CPS_4944</name>
</gene>
<comment type="function">
    <text evidence="1">Catalyzes the last two sequential reactions in the de novo biosynthetic pathway for UDP-N-acetylglucosamine (UDP-GlcNAc). The C-terminal domain catalyzes the transfer of acetyl group from acetyl coenzyme A to glucosamine-1-phosphate (GlcN-1-P) to produce N-acetylglucosamine-1-phosphate (GlcNAc-1-P), which is converted into UDP-GlcNAc by the transfer of uridine 5-monophosphate (from uridine 5-triphosphate), a reaction catalyzed by the N-terminal domain.</text>
</comment>
<comment type="catalytic activity">
    <reaction evidence="1">
        <text>alpha-D-glucosamine 1-phosphate + acetyl-CoA = N-acetyl-alpha-D-glucosamine 1-phosphate + CoA + H(+)</text>
        <dbReference type="Rhea" id="RHEA:13725"/>
        <dbReference type="ChEBI" id="CHEBI:15378"/>
        <dbReference type="ChEBI" id="CHEBI:57287"/>
        <dbReference type="ChEBI" id="CHEBI:57288"/>
        <dbReference type="ChEBI" id="CHEBI:57776"/>
        <dbReference type="ChEBI" id="CHEBI:58516"/>
        <dbReference type="EC" id="2.3.1.157"/>
    </reaction>
</comment>
<comment type="catalytic activity">
    <reaction evidence="1">
        <text>N-acetyl-alpha-D-glucosamine 1-phosphate + UTP + H(+) = UDP-N-acetyl-alpha-D-glucosamine + diphosphate</text>
        <dbReference type="Rhea" id="RHEA:13509"/>
        <dbReference type="ChEBI" id="CHEBI:15378"/>
        <dbReference type="ChEBI" id="CHEBI:33019"/>
        <dbReference type="ChEBI" id="CHEBI:46398"/>
        <dbReference type="ChEBI" id="CHEBI:57705"/>
        <dbReference type="ChEBI" id="CHEBI:57776"/>
        <dbReference type="EC" id="2.7.7.23"/>
    </reaction>
</comment>
<comment type="cofactor">
    <cofactor evidence="1">
        <name>Mg(2+)</name>
        <dbReference type="ChEBI" id="CHEBI:18420"/>
    </cofactor>
    <text evidence="1">Binds 1 Mg(2+) ion per subunit.</text>
</comment>
<comment type="pathway">
    <text evidence="1">Nucleotide-sugar biosynthesis; UDP-N-acetyl-alpha-D-glucosamine biosynthesis; N-acetyl-alpha-D-glucosamine 1-phosphate from alpha-D-glucosamine 6-phosphate (route II): step 2/2.</text>
</comment>
<comment type="pathway">
    <text evidence="1">Nucleotide-sugar biosynthesis; UDP-N-acetyl-alpha-D-glucosamine biosynthesis; UDP-N-acetyl-alpha-D-glucosamine from N-acetyl-alpha-D-glucosamine 1-phosphate: step 1/1.</text>
</comment>
<comment type="pathway">
    <text evidence="1">Bacterial outer membrane biogenesis; LPS lipid A biosynthesis.</text>
</comment>
<comment type="subunit">
    <text evidence="1">Homotrimer.</text>
</comment>
<comment type="subcellular location">
    <subcellularLocation>
        <location evidence="1">Cytoplasm</location>
    </subcellularLocation>
</comment>
<comment type="similarity">
    <text evidence="1">In the N-terminal section; belongs to the N-acetylglucosamine-1-phosphate uridyltransferase family.</text>
</comment>
<comment type="similarity">
    <text evidence="1">In the C-terminal section; belongs to the transferase hexapeptide repeat family.</text>
</comment>
<dbReference type="EC" id="2.7.7.23" evidence="1"/>
<dbReference type="EC" id="2.3.1.157" evidence="1"/>
<dbReference type="EMBL" id="CP000083">
    <property type="protein sequence ID" value="AAZ26132.1"/>
    <property type="molecule type" value="Genomic_DNA"/>
</dbReference>
<dbReference type="RefSeq" id="WP_011045663.1">
    <property type="nucleotide sequence ID" value="NC_003910.7"/>
</dbReference>
<dbReference type="SMR" id="Q47UE0"/>
<dbReference type="STRING" id="167879.CPS_4944"/>
<dbReference type="KEGG" id="cps:CPS_4944"/>
<dbReference type="eggNOG" id="COG1207">
    <property type="taxonomic scope" value="Bacteria"/>
</dbReference>
<dbReference type="HOGENOM" id="CLU_029499_15_2_6"/>
<dbReference type="UniPathway" id="UPA00113">
    <property type="reaction ID" value="UER00532"/>
</dbReference>
<dbReference type="UniPathway" id="UPA00113">
    <property type="reaction ID" value="UER00533"/>
</dbReference>
<dbReference type="UniPathway" id="UPA00973"/>
<dbReference type="Proteomes" id="UP000000547">
    <property type="component" value="Chromosome"/>
</dbReference>
<dbReference type="GO" id="GO:0005737">
    <property type="term" value="C:cytoplasm"/>
    <property type="evidence" value="ECO:0007669"/>
    <property type="project" value="UniProtKB-SubCell"/>
</dbReference>
<dbReference type="GO" id="GO:0016020">
    <property type="term" value="C:membrane"/>
    <property type="evidence" value="ECO:0007669"/>
    <property type="project" value="GOC"/>
</dbReference>
<dbReference type="GO" id="GO:0019134">
    <property type="term" value="F:glucosamine-1-phosphate N-acetyltransferase activity"/>
    <property type="evidence" value="ECO:0007669"/>
    <property type="project" value="UniProtKB-UniRule"/>
</dbReference>
<dbReference type="GO" id="GO:0000287">
    <property type="term" value="F:magnesium ion binding"/>
    <property type="evidence" value="ECO:0007669"/>
    <property type="project" value="UniProtKB-UniRule"/>
</dbReference>
<dbReference type="GO" id="GO:0003977">
    <property type="term" value="F:UDP-N-acetylglucosamine diphosphorylase activity"/>
    <property type="evidence" value="ECO:0007669"/>
    <property type="project" value="UniProtKB-UniRule"/>
</dbReference>
<dbReference type="GO" id="GO:0000902">
    <property type="term" value="P:cell morphogenesis"/>
    <property type="evidence" value="ECO:0007669"/>
    <property type="project" value="UniProtKB-UniRule"/>
</dbReference>
<dbReference type="GO" id="GO:0071555">
    <property type="term" value="P:cell wall organization"/>
    <property type="evidence" value="ECO:0007669"/>
    <property type="project" value="UniProtKB-KW"/>
</dbReference>
<dbReference type="GO" id="GO:0009245">
    <property type="term" value="P:lipid A biosynthetic process"/>
    <property type="evidence" value="ECO:0007669"/>
    <property type="project" value="UniProtKB-UniRule"/>
</dbReference>
<dbReference type="GO" id="GO:0009252">
    <property type="term" value="P:peptidoglycan biosynthetic process"/>
    <property type="evidence" value="ECO:0007669"/>
    <property type="project" value="UniProtKB-UniRule"/>
</dbReference>
<dbReference type="GO" id="GO:0008360">
    <property type="term" value="P:regulation of cell shape"/>
    <property type="evidence" value="ECO:0007669"/>
    <property type="project" value="UniProtKB-KW"/>
</dbReference>
<dbReference type="GO" id="GO:0006048">
    <property type="term" value="P:UDP-N-acetylglucosamine biosynthetic process"/>
    <property type="evidence" value="ECO:0007669"/>
    <property type="project" value="UniProtKB-UniPathway"/>
</dbReference>
<dbReference type="CDD" id="cd02540">
    <property type="entry name" value="GT2_GlmU_N_bac"/>
    <property type="match status" value="1"/>
</dbReference>
<dbReference type="CDD" id="cd03353">
    <property type="entry name" value="LbH_GlmU_C"/>
    <property type="match status" value="1"/>
</dbReference>
<dbReference type="Gene3D" id="2.160.10.10">
    <property type="entry name" value="Hexapeptide repeat proteins"/>
    <property type="match status" value="1"/>
</dbReference>
<dbReference type="Gene3D" id="3.90.550.10">
    <property type="entry name" value="Spore Coat Polysaccharide Biosynthesis Protein SpsA, Chain A"/>
    <property type="match status" value="1"/>
</dbReference>
<dbReference type="HAMAP" id="MF_01631">
    <property type="entry name" value="GlmU"/>
    <property type="match status" value="1"/>
</dbReference>
<dbReference type="InterPro" id="IPR005882">
    <property type="entry name" value="Bifunctional_GlmU"/>
</dbReference>
<dbReference type="InterPro" id="IPR050065">
    <property type="entry name" value="GlmU-like"/>
</dbReference>
<dbReference type="InterPro" id="IPR038009">
    <property type="entry name" value="GlmU_C_LbH"/>
</dbReference>
<dbReference type="InterPro" id="IPR001451">
    <property type="entry name" value="Hexapep"/>
</dbReference>
<dbReference type="InterPro" id="IPR018357">
    <property type="entry name" value="Hexapep_transf_CS"/>
</dbReference>
<dbReference type="InterPro" id="IPR025877">
    <property type="entry name" value="MobA-like_NTP_Trfase"/>
</dbReference>
<dbReference type="InterPro" id="IPR029044">
    <property type="entry name" value="Nucleotide-diphossugar_trans"/>
</dbReference>
<dbReference type="InterPro" id="IPR011004">
    <property type="entry name" value="Trimer_LpxA-like_sf"/>
</dbReference>
<dbReference type="NCBIfam" id="TIGR01173">
    <property type="entry name" value="glmU"/>
    <property type="match status" value="1"/>
</dbReference>
<dbReference type="PANTHER" id="PTHR43584:SF3">
    <property type="entry name" value="BIFUNCTIONAL PROTEIN GLMU"/>
    <property type="match status" value="1"/>
</dbReference>
<dbReference type="PANTHER" id="PTHR43584">
    <property type="entry name" value="NUCLEOTIDYL TRANSFERASE"/>
    <property type="match status" value="1"/>
</dbReference>
<dbReference type="Pfam" id="PF00132">
    <property type="entry name" value="Hexapep"/>
    <property type="match status" value="1"/>
</dbReference>
<dbReference type="Pfam" id="PF12804">
    <property type="entry name" value="NTP_transf_3"/>
    <property type="match status" value="1"/>
</dbReference>
<dbReference type="SUPFAM" id="SSF53448">
    <property type="entry name" value="Nucleotide-diphospho-sugar transferases"/>
    <property type="match status" value="1"/>
</dbReference>
<dbReference type="SUPFAM" id="SSF51161">
    <property type="entry name" value="Trimeric LpxA-like enzymes"/>
    <property type="match status" value="1"/>
</dbReference>
<dbReference type="PROSITE" id="PS00101">
    <property type="entry name" value="HEXAPEP_TRANSFERASES"/>
    <property type="match status" value="1"/>
</dbReference>
<organism>
    <name type="scientific">Colwellia psychrerythraea (strain 34H / ATCC BAA-681)</name>
    <name type="common">Vibrio psychroerythus</name>
    <dbReference type="NCBI Taxonomy" id="167879"/>
    <lineage>
        <taxon>Bacteria</taxon>
        <taxon>Pseudomonadati</taxon>
        <taxon>Pseudomonadota</taxon>
        <taxon>Gammaproteobacteria</taxon>
        <taxon>Alteromonadales</taxon>
        <taxon>Colwelliaceae</taxon>
        <taxon>Colwellia</taxon>
    </lineage>
</organism>
<reference key="1">
    <citation type="journal article" date="2005" name="Proc. Natl. Acad. Sci. U.S.A.">
        <title>The psychrophilic lifestyle as revealed by the genome sequence of Colwellia psychrerythraea 34H through genomic and proteomic analyses.</title>
        <authorList>
            <person name="Methe B.A."/>
            <person name="Nelson K.E."/>
            <person name="Deming J.W."/>
            <person name="Momen B."/>
            <person name="Melamud E."/>
            <person name="Zhang X."/>
            <person name="Moult J."/>
            <person name="Madupu R."/>
            <person name="Nelson W.C."/>
            <person name="Dodson R.J."/>
            <person name="Brinkac L.M."/>
            <person name="Daugherty S.C."/>
            <person name="Durkin A.S."/>
            <person name="DeBoy R.T."/>
            <person name="Kolonay J.F."/>
            <person name="Sullivan S.A."/>
            <person name="Zhou L."/>
            <person name="Davidsen T.M."/>
            <person name="Wu M."/>
            <person name="Huston A.L."/>
            <person name="Lewis M."/>
            <person name="Weaver B."/>
            <person name="Weidman J.F."/>
            <person name="Khouri H."/>
            <person name="Utterback T.R."/>
            <person name="Feldblyum T.V."/>
            <person name="Fraser C.M."/>
        </authorList>
    </citation>
    <scope>NUCLEOTIDE SEQUENCE [LARGE SCALE GENOMIC DNA]</scope>
    <source>
        <strain>34H / ATCC BAA-681</strain>
    </source>
</reference>